<proteinExistence type="inferred from homology"/>
<organism>
    <name type="scientific">Methylibium petroleiphilum (strain ATCC BAA-1232 / LMG 22953 / PM1)</name>
    <dbReference type="NCBI Taxonomy" id="420662"/>
    <lineage>
        <taxon>Bacteria</taxon>
        <taxon>Pseudomonadati</taxon>
        <taxon>Pseudomonadota</taxon>
        <taxon>Betaproteobacteria</taxon>
        <taxon>Burkholderiales</taxon>
        <taxon>Sphaerotilaceae</taxon>
        <taxon>Methylibium</taxon>
    </lineage>
</organism>
<gene>
    <name evidence="1" type="primary">hisF</name>
    <name type="ordered locus">Mpe_A0836</name>
</gene>
<keyword id="KW-0028">Amino-acid biosynthesis</keyword>
<keyword id="KW-0963">Cytoplasm</keyword>
<keyword id="KW-0368">Histidine biosynthesis</keyword>
<keyword id="KW-0456">Lyase</keyword>
<keyword id="KW-1185">Reference proteome</keyword>
<dbReference type="EC" id="4.3.2.10" evidence="1"/>
<dbReference type="EMBL" id="CP000555">
    <property type="protein sequence ID" value="ABM93798.1"/>
    <property type="molecule type" value="Genomic_DNA"/>
</dbReference>
<dbReference type="RefSeq" id="WP_011828436.1">
    <property type="nucleotide sequence ID" value="NC_008825.1"/>
</dbReference>
<dbReference type="SMR" id="A2SE09"/>
<dbReference type="STRING" id="420662.Mpe_A0836"/>
<dbReference type="KEGG" id="mpt:Mpe_A0836"/>
<dbReference type="eggNOG" id="COG0107">
    <property type="taxonomic scope" value="Bacteria"/>
</dbReference>
<dbReference type="HOGENOM" id="CLU_048577_4_0_4"/>
<dbReference type="UniPathway" id="UPA00031">
    <property type="reaction ID" value="UER00010"/>
</dbReference>
<dbReference type="Proteomes" id="UP000000366">
    <property type="component" value="Chromosome"/>
</dbReference>
<dbReference type="GO" id="GO:0005737">
    <property type="term" value="C:cytoplasm"/>
    <property type="evidence" value="ECO:0007669"/>
    <property type="project" value="UniProtKB-SubCell"/>
</dbReference>
<dbReference type="GO" id="GO:0000107">
    <property type="term" value="F:imidazoleglycerol-phosphate synthase activity"/>
    <property type="evidence" value="ECO:0007669"/>
    <property type="project" value="UniProtKB-UniRule"/>
</dbReference>
<dbReference type="GO" id="GO:0016829">
    <property type="term" value="F:lyase activity"/>
    <property type="evidence" value="ECO:0007669"/>
    <property type="project" value="UniProtKB-KW"/>
</dbReference>
<dbReference type="GO" id="GO:0000105">
    <property type="term" value="P:L-histidine biosynthetic process"/>
    <property type="evidence" value="ECO:0007669"/>
    <property type="project" value="UniProtKB-UniRule"/>
</dbReference>
<dbReference type="CDD" id="cd04731">
    <property type="entry name" value="HisF"/>
    <property type="match status" value="1"/>
</dbReference>
<dbReference type="FunFam" id="3.20.20.70:FF:000006">
    <property type="entry name" value="Imidazole glycerol phosphate synthase subunit HisF"/>
    <property type="match status" value="1"/>
</dbReference>
<dbReference type="Gene3D" id="3.20.20.70">
    <property type="entry name" value="Aldolase class I"/>
    <property type="match status" value="1"/>
</dbReference>
<dbReference type="HAMAP" id="MF_01013">
    <property type="entry name" value="HisF"/>
    <property type="match status" value="1"/>
</dbReference>
<dbReference type="InterPro" id="IPR013785">
    <property type="entry name" value="Aldolase_TIM"/>
</dbReference>
<dbReference type="InterPro" id="IPR006062">
    <property type="entry name" value="His_biosynth"/>
</dbReference>
<dbReference type="InterPro" id="IPR004651">
    <property type="entry name" value="HisF"/>
</dbReference>
<dbReference type="InterPro" id="IPR050064">
    <property type="entry name" value="IGPS_HisA/HisF"/>
</dbReference>
<dbReference type="InterPro" id="IPR011060">
    <property type="entry name" value="RibuloseP-bd_barrel"/>
</dbReference>
<dbReference type="NCBIfam" id="TIGR00735">
    <property type="entry name" value="hisF"/>
    <property type="match status" value="1"/>
</dbReference>
<dbReference type="PANTHER" id="PTHR21235:SF2">
    <property type="entry name" value="IMIDAZOLE GLYCEROL PHOSPHATE SYNTHASE HISHF"/>
    <property type="match status" value="1"/>
</dbReference>
<dbReference type="PANTHER" id="PTHR21235">
    <property type="entry name" value="IMIDAZOLE GLYCEROL PHOSPHATE SYNTHASE SUBUNIT HISF/H IGP SYNTHASE SUBUNIT HISF/H"/>
    <property type="match status" value="1"/>
</dbReference>
<dbReference type="Pfam" id="PF00977">
    <property type="entry name" value="His_biosynth"/>
    <property type="match status" value="1"/>
</dbReference>
<dbReference type="SUPFAM" id="SSF51366">
    <property type="entry name" value="Ribulose-phoshate binding barrel"/>
    <property type="match status" value="1"/>
</dbReference>
<sequence length="253" mass="26450">MLAKRIIPCLDVTGGRVVKGVNFVELRDAGDPVEIAARYNEQGADELTFLDITATSDGRDLILPIIEAVASQVFIPLTVGGGVRSVEDVRRLLNAGADKVSFNSAAVANPQLIRDASDKYGAQCIVVAIDAKARVGGEGWEVYTHGGRRNTGLDAVAWAQQMAEFGAGEILLTSMDRDGTQIGFNLPLTRAVSDAVPVPVIASGGVGALEHLAEGIQVGGADAVLAASIFHYGTFTVGQAKALMAEHGIPVRM</sequence>
<accession>A2SE09</accession>
<evidence type="ECO:0000255" key="1">
    <source>
        <dbReference type="HAMAP-Rule" id="MF_01013"/>
    </source>
</evidence>
<name>HIS6_METPP</name>
<protein>
    <recommendedName>
        <fullName evidence="1">Imidazole glycerol phosphate synthase subunit HisF</fullName>
        <ecNumber evidence="1">4.3.2.10</ecNumber>
    </recommendedName>
    <alternativeName>
        <fullName evidence="1">IGP synthase cyclase subunit</fullName>
    </alternativeName>
    <alternativeName>
        <fullName evidence="1">IGP synthase subunit HisF</fullName>
    </alternativeName>
    <alternativeName>
        <fullName evidence="1">ImGP synthase subunit HisF</fullName>
        <shortName evidence="1">IGPS subunit HisF</shortName>
    </alternativeName>
</protein>
<comment type="function">
    <text evidence="1">IGPS catalyzes the conversion of PRFAR and glutamine to IGP, AICAR and glutamate. The HisF subunit catalyzes the cyclization activity that produces IGP and AICAR from PRFAR using the ammonia provided by the HisH subunit.</text>
</comment>
<comment type="catalytic activity">
    <reaction evidence="1">
        <text>5-[(5-phospho-1-deoxy-D-ribulos-1-ylimino)methylamino]-1-(5-phospho-beta-D-ribosyl)imidazole-4-carboxamide + L-glutamine = D-erythro-1-(imidazol-4-yl)glycerol 3-phosphate + 5-amino-1-(5-phospho-beta-D-ribosyl)imidazole-4-carboxamide + L-glutamate + H(+)</text>
        <dbReference type="Rhea" id="RHEA:24793"/>
        <dbReference type="ChEBI" id="CHEBI:15378"/>
        <dbReference type="ChEBI" id="CHEBI:29985"/>
        <dbReference type="ChEBI" id="CHEBI:58278"/>
        <dbReference type="ChEBI" id="CHEBI:58359"/>
        <dbReference type="ChEBI" id="CHEBI:58475"/>
        <dbReference type="ChEBI" id="CHEBI:58525"/>
        <dbReference type="EC" id="4.3.2.10"/>
    </reaction>
</comment>
<comment type="pathway">
    <text evidence="1">Amino-acid biosynthesis; L-histidine biosynthesis; L-histidine from 5-phospho-alpha-D-ribose 1-diphosphate: step 5/9.</text>
</comment>
<comment type="subunit">
    <text evidence="1">Heterodimer of HisH and HisF.</text>
</comment>
<comment type="subcellular location">
    <subcellularLocation>
        <location evidence="1">Cytoplasm</location>
    </subcellularLocation>
</comment>
<comment type="similarity">
    <text evidence="1">Belongs to the HisA/HisF family.</text>
</comment>
<reference key="1">
    <citation type="journal article" date="2007" name="J. Bacteriol.">
        <title>Whole-genome analysis of the methyl tert-butyl ether-degrading beta-proteobacterium Methylibium petroleiphilum PM1.</title>
        <authorList>
            <person name="Kane S.R."/>
            <person name="Chakicherla A.Y."/>
            <person name="Chain P.S.G."/>
            <person name="Schmidt R."/>
            <person name="Shin M.W."/>
            <person name="Legler T.C."/>
            <person name="Scow K.M."/>
            <person name="Larimer F.W."/>
            <person name="Lucas S.M."/>
            <person name="Richardson P.M."/>
            <person name="Hristova K.R."/>
        </authorList>
    </citation>
    <scope>NUCLEOTIDE SEQUENCE [LARGE SCALE GENOMIC DNA]</scope>
    <source>
        <strain>ATCC BAA-1232 / LMG 22953 / PM1</strain>
    </source>
</reference>
<feature type="chain" id="PRO_1000063088" description="Imidazole glycerol phosphate synthase subunit HisF">
    <location>
        <begin position="1"/>
        <end position="253"/>
    </location>
</feature>
<feature type="active site" evidence="1">
    <location>
        <position position="11"/>
    </location>
</feature>
<feature type="active site" evidence="1">
    <location>
        <position position="130"/>
    </location>
</feature>